<reference key="1">
    <citation type="journal article" date="2002" name="Nature">
        <title>Sequence and analysis of chromosome 2 of Dictyostelium discoideum.</title>
        <authorList>
            <person name="Gloeckner G."/>
            <person name="Eichinger L."/>
            <person name="Szafranski K."/>
            <person name="Pachebat J.A."/>
            <person name="Bankier A.T."/>
            <person name="Dear P.H."/>
            <person name="Lehmann R."/>
            <person name="Baumgart C."/>
            <person name="Parra G."/>
            <person name="Abril J.F."/>
            <person name="Guigo R."/>
            <person name="Kumpf K."/>
            <person name="Tunggal B."/>
            <person name="Cox E.C."/>
            <person name="Quail M.A."/>
            <person name="Platzer M."/>
            <person name="Rosenthal A."/>
            <person name="Noegel A.A."/>
        </authorList>
    </citation>
    <scope>NUCLEOTIDE SEQUENCE [LARGE SCALE GENOMIC DNA]</scope>
    <source>
        <strain>AX4</strain>
    </source>
</reference>
<reference key="2">
    <citation type="journal article" date="2005" name="Nature">
        <title>The genome of the social amoeba Dictyostelium discoideum.</title>
        <authorList>
            <person name="Eichinger L."/>
            <person name="Pachebat J.A."/>
            <person name="Gloeckner G."/>
            <person name="Rajandream M.A."/>
            <person name="Sucgang R."/>
            <person name="Berriman M."/>
            <person name="Song J."/>
            <person name="Olsen R."/>
            <person name="Szafranski K."/>
            <person name="Xu Q."/>
            <person name="Tunggal B."/>
            <person name="Kummerfeld S."/>
            <person name="Madera M."/>
            <person name="Konfortov B.A."/>
            <person name="Rivero F."/>
            <person name="Bankier A.T."/>
            <person name="Lehmann R."/>
            <person name="Hamlin N."/>
            <person name="Davies R."/>
            <person name="Gaudet P."/>
            <person name="Fey P."/>
            <person name="Pilcher K."/>
            <person name="Chen G."/>
            <person name="Saunders D."/>
            <person name="Sodergren E.J."/>
            <person name="Davis P."/>
            <person name="Kerhornou A."/>
            <person name="Nie X."/>
            <person name="Hall N."/>
            <person name="Anjard C."/>
            <person name="Hemphill L."/>
            <person name="Bason N."/>
            <person name="Farbrother P."/>
            <person name="Desany B."/>
            <person name="Just E."/>
            <person name="Morio T."/>
            <person name="Rost R."/>
            <person name="Churcher C.M."/>
            <person name="Cooper J."/>
            <person name="Haydock S."/>
            <person name="van Driessche N."/>
            <person name="Cronin A."/>
            <person name="Goodhead I."/>
            <person name="Muzny D.M."/>
            <person name="Mourier T."/>
            <person name="Pain A."/>
            <person name="Lu M."/>
            <person name="Harper D."/>
            <person name="Lindsay R."/>
            <person name="Hauser H."/>
            <person name="James K.D."/>
            <person name="Quiles M."/>
            <person name="Madan Babu M."/>
            <person name="Saito T."/>
            <person name="Buchrieser C."/>
            <person name="Wardroper A."/>
            <person name="Felder M."/>
            <person name="Thangavelu M."/>
            <person name="Johnson D."/>
            <person name="Knights A."/>
            <person name="Loulseged H."/>
            <person name="Mungall K.L."/>
            <person name="Oliver K."/>
            <person name="Price C."/>
            <person name="Quail M.A."/>
            <person name="Urushihara H."/>
            <person name="Hernandez J."/>
            <person name="Rabbinowitsch E."/>
            <person name="Steffen D."/>
            <person name="Sanders M."/>
            <person name="Ma J."/>
            <person name="Kohara Y."/>
            <person name="Sharp S."/>
            <person name="Simmonds M.N."/>
            <person name="Spiegler S."/>
            <person name="Tivey A."/>
            <person name="Sugano S."/>
            <person name="White B."/>
            <person name="Walker D."/>
            <person name="Woodward J.R."/>
            <person name="Winckler T."/>
            <person name="Tanaka Y."/>
            <person name="Shaulsky G."/>
            <person name="Schleicher M."/>
            <person name="Weinstock G.M."/>
            <person name="Rosenthal A."/>
            <person name="Cox E.C."/>
            <person name="Chisholm R.L."/>
            <person name="Gibbs R.A."/>
            <person name="Loomis W.F."/>
            <person name="Platzer M."/>
            <person name="Kay R.R."/>
            <person name="Williams J.G."/>
            <person name="Dear P.H."/>
            <person name="Noegel A.A."/>
            <person name="Barrell B.G."/>
            <person name="Kuspa A."/>
        </authorList>
    </citation>
    <scope>NUCLEOTIDE SEQUENCE [LARGE SCALE GENOMIC DNA]</scope>
    <source>
        <strain>AX4</strain>
    </source>
</reference>
<evidence type="ECO:0000256" key="1">
    <source>
        <dbReference type="SAM" id="MobiDB-lite"/>
    </source>
</evidence>
<evidence type="ECO:0000305" key="2"/>
<sequence length="466" mass="52915">MEIGTSSTTNNIGVAPTIPQDIVNNNNHNNNSSNNSSNNNSISSSPTDSSQLMNGEQSTSPPSPPIEEVLEEEPRNLLISLLSELKIGVDLSRVPLPTFILEPRSLLEKFTDNMIHGEILCNLSKLESPMDRMHLITKWYLSAFHYRKKGLQKPYNPILGEIFRTRWEFKETNSNCIMVAEQISHHPPVSCIYLSNRKDGYTMTGTINPRSKFLGNSMAVIVDGSSTLTLLGLQEEYVITFPTAVARGIIFGTLLTEIVGNSTISCKQTNIKVEMDFKAKPMFGGEYNVVCGKIKKGNETTHTFNGKWDKKVEITLSSSSSSSKKKNGSTNDILWDCNDAVKTQMITRQISEQEEFESQRLWQKVSHAIIKKNQKDATFEKNKLEDEQRKRVKDRKENNIEWEPRLFKKVNDQWIYKYQNHTLYDQNEPKEIETDGIIHFEGTLIKKESKQNLVEKCGASENEIIV</sequence>
<gene>
    <name type="primary">osbD</name>
    <name type="ORF">DDB_G0272498</name>
</gene>
<proteinExistence type="inferred from homology"/>
<protein>
    <recommendedName>
        <fullName>Oxysterol-binding protein 4</fullName>
    </recommendedName>
    <alternativeName>
        <fullName>OSBPd</fullName>
    </alternativeName>
</protein>
<feature type="chain" id="PRO_0000328470" description="Oxysterol-binding protein 4">
    <location>
        <begin position="1"/>
        <end position="466"/>
    </location>
</feature>
<feature type="region of interest" description="Disordered" evidence="1">
    <location>
        <begin position="1"/>
        <end position="67"/>
    </location>
</feature>
<feature type="compositionally biased region" description="Polar residues" evidence="1">
    <location>
        <begin position="1"/>
        <end position="12"/>
    </location>
</feature>
<feature type="compositionally biased region" description="Low complexity" evidence="1">
    <location>
        <begin position="24"/>
        <end position="45"/>
    </location>
</feature>
<feature type="compositionally biased region" description="Polar residues" evidence="1">
    <location>
        <begin position="46"/>
        <end position="60"/>
    </location>
</feature>
<organism>
    <name type="scientific">Dictyostelium discoideum</name>
    <name type="common">Social amoeba</name>
    <dbReference type="NCBI Taxonomy" id="44689"/>
    <lineage>
        <taxon>Eukaryota</taxon>
        <taxon>Amoebozoa</taxon>
        <taxon>Evosea</taxon>
        <taxon>Eumycetozoa</taxon>
        <taxon>Dictyostelia</taxon>
        <taxon>Dictyosteliales</taxon>
        <taxon>Dictyosteliaceae</taxon>
        <taxon>Dictyostelium</taxon>
    </lineage>
</organism>
<comment type="similarity">
    <text evidence="2">Belongs to the OSBP family.</text>
</comment>
<name>OSB4_DICDI</name>
<accession>Q86KG4</accession>
<accession>Q559J7</accession>
<keyword id="KW-1185">Reference proteome</keyword>
<dbReference type="EMBL" id="AAFI02000008">
    <property type="protein sequence ID" value="EAL71173.1"/>
    <property type="molecule type" value="Genomic_DNA"/>
</dbReference>
<dbReference type="RefSeq" id="XP_645109.1">
    <property type="nucleotide sequence ID" value="XM_640017.1"/>
</dbReference>
<dbReference type="SMR" id="Q86KG4"/>
<dbReference type="FunCoup" id="Q86KG4">
    <property type="interactions" value="183"/>
</dbReference>
<dbReference type="STRING" id="44689.Q86KG4"/>
<dbReference type="GlyGen" id="Q86KG4">
    <property type="glycosylation" value="1 site"/>
</dbReference>
<dbReference type="PaxDb" id="44689-DDB0237808"/>
<dbReference type="EnsemblProtists" id="EAL71173">
    <property type="protein sequence ID" value="EAL71173"/>
    <property type="gene ID" value="DDB_G0272498"/>
</dbReference>
<dbReference type="GeneID" id="8618503"/>
<dbReference type="KEGG" id="ddi:DDB_G0272498"/>
<dbReference type="dictyBase" id="DDB_G0272498">
    <property type="gene designation" value="osbD"/>
</dbReference>
<dbReference type="VEuPathDB" id="AmoebaDB:DDB_G0272498"/>
<dbReference type="eggNOG" id="KOG2210">
    <property type="taxonomic scope" value="Eukaryota"/>
</dbReference>
<dbReference type="HOGENOM" id="CLU_012334_1_0_1"/>
<dbReference type="InParanoid" id="Q86KG4"/>
<dbReference type="OMA" id="AMYISEQ"/>
<dbReference type="PhylomeDB" id="Q86KG4"/>
<dbReference type="Reactome" id="R-DDI-1482801">
    <property type="pathway name" value="Acyl chain remodelling of PS"/>
</dbReference>
<dbReference type="Reactome" id="R-DDI-192105">
    <property type="pathway name" value="Synthesis of bile acids and bile salts"/>
</dbReference>
<dbReference type="Reactome" id="R-DDI-9013407">
    <property type="pathway name" value="RHOH GTPase cycle"/>
</dbReference>
<dbReference type="PRO" id="PR:Q86KG4"/>
<dbReference type="Proteomes" id="UP000002195">
    <property type="component" value="Chromosome 2"/>
</dbReference>
<dbReference type="GO" id="GO:0005829">
    <property type="term" value="C:cytosol"/>
    <property type="evidence" value="ECO:0000318"/>
    <property type="project" value="GO_Central"/>
</dbReference>
<dbReference type="GO" id="GO:0016020">
    <property type="term" value="C:membrane"/>
    <property type="evidence" value="ECO:0000318"/>
    <property type="project" value="GO_Central"/>
</dbReference>
<dbReference type="GO" id="GO:0032934">
    <property type="term" value="F:sterol binding"/>
    <property type="evidence" value="ECO:0000318"/>
    <property type="project" value="GO_Central"/>
</dbReference>
<dbReference type="FunFam" id="3.30.70.3490:FF:000029">
    <property type="match status" value="1"/>
</dbReference>
<dbReference type="FunFam" id="1.10.287.2720:FF:000001">
    <property type="entry name" value="Oxysterol-binding OBPalpha"/>
    <property type="match status" value="1"/>
</dbReference>
<dbReference type="FunFam" id="2.40.160.120:FF:000042">
    <property type="entry name" value="Oxysterol-binding protein 4"/>
    <property type="match status" value="1"/>
</dbReference>
<dbReference type="Gene3D" id="1.10.287.2720">
    <property type="match status" value="1"/>
</dbReference>
<dbReference type="Gene3D" id="2.40.160.120">
    <property type="match status" value="1"/>
</dbReference>
<dbReference type="Gene3D" id="3.30.70.3490">
    <property type="match status" value="1"/>
</dbReference>
<dbReference type="InterPro" id="IPR037239">
    <property type="entry name" value="OSBP_sf"/>
</dbReference>
<dbReference type="InterPro" id="IPR000648">
    <property type="entry name" value="Oxysterol-bd"/>
</dbReference>
<dbReference type="InterPro" id="IPR018494">
    <property type="entry name" value="Oxysterol-bd_CS"/>
</dbReference>
<dbReference type="PANTHER" id="PTHR10972:SF102">
    <property type="entry name" value="OXYSTEROL-BINDING PROTEIN"/>
    <property type="match status" value="1"/>
</dbReference>
<dbReference type="PANTHER" id="PTHR10972">
    <property type="entry name" value="OXYSTEROL-BINDING PROTEIN-RELATED"/>
    <property type="match status" value="1"/>
</dbReference>
<dbReference type="Pfam" id="PF01237">
    <property type="entry name" value="Oxysterol_BP"/>
    <property type="match status" value="1"/>
</dbReference>
<dbReference type="SUPFAM" id="SSF144000">
    <property type="entry name" value="Oxysterol-binding protein-like"/>
    <property type="match status" value="1"/>
</dbReference>
<dbReference type="PROSITE" id="PS01013">
    <property type="entry name" value="OSBP"/>
    <property type="match status" value="1"/>
</dbReference>